<gene>
    <name evidence="1" type="primary">hisF</name>
    <name type="ordered locus">BSUIS_A1927</name>
</gene>
<proteinExistence type="inferred from homology"/>
<comment type="function">
    <text evidence="1">IGPS catalyzes the conversion of PRFAR and glutamine to IGP, AICAR and glutamate. The HisF subunit catalyzes the cyclization activity that produces IGP and AICAR from PRFAR using the ammonia provided by the HisH subunit.</text>
</comment>
<comment type="catalytic activity">
    <reaction evidence="1">
        <text>5-[(5-phospho-1-deoxy-D-ribulos-1-ylimino)methylamino]-1-(5-phospho-beta-D-ribosyl)imidazole-4-carboxamide + L-glutamine = D-erythro-1-(imidazol-4-yl)glycerol 3-phosphate + 5-amino-1-(5-phospho-beta-D-ribosyl)imidazole-4-carboxamide + L-glutamate + H(+)</text>
        <dbReference type="Rhea" id="RHEA:24793"/>
        <dbReference type="ChEBI" id="CHEBI:15378"/>
        <dbReference type="ChEBI" id="CHEBI:29985"/>
        <dbReference type="ChEBI" id="CHEBI:58278"/>
        <dbReference type="ChEBI" id="CHEBI:58359"/>
        <dbReference type="ChEBI" id="CHEBI:58475"/>
        <dbReference type="ChEBI" id="CHEBI:58525"/>
        <dbReference type="EC" id="4.3.2.10"/>
    </reaction>
</comment>
<comment type="pathway">
    <text evidence="1">Amino-acid biosynthesis; L-histidine biosynthesis; L-histidine from 5-phospho-alpha-D-ribose 1-diphosphate: step 5/9.</text>
</comment>
<comment type="subunit">
    <text evidence="1">Heterodimer of HisH and HisF.</text>
</comment>
<comment type="subcellular location">
    <subcellularLocation>
        <location evidence="1">Cytoplasm</location>
    </subcellularLocation>
</comment>
<comment type="similarity">
    <text evidence="1">Belongs to the HisA/HisF family.</text>
</comment>
<dbReference type="EC" id="4.3.2.10" evidence="1"/>
<dbReference type="EMBL" id="CP000911">
    <property type="protein sequence ID" value="ABY38938.1"/>
    <property type="molecule type" value="Genomic_DNA"/>
</dbReference>
<dbReference type="RefSeq" id="WP_002965151.1">
    <property type="nucleotide sequence ID" value="NC_010169.1"/>
</dbReference>
<dbReference type="SMR" id="B0CJI6"/>
<dbReference type="GeneID" id="97534652"/>
<dbReference type="KEGG" id="bmt:BSUIS_A1927"/>
<dbReference type="HOGENOM" id="CLU_048577_4_0_5"/>
<dbReference type="UniPathway" id="UPA00031">
    <property type="reaction ID" value="UER00010"/>
</dbReference>
<dbReference type="PRO" id="PR:B0CJI6"/>
<dbReference type="Proteomes" id="UP000008545">
    <property type="component" value="Chromosome I"/>
</dbReference>
<dbReference type="GO" id="GO:0005737">
    <property type="term" value="C:cytoplasm"/>
    <property type="evidence" value="ECO:0007669"/>
    <property type="project" value="UniProtKB-SubCell"/>
</dbReference>
<dbReference type="GO" id="GO:0000107">
    <property type="term" value="F:imidazoleglycerol-phosphate synthase activity"/>
    <property type="evidence" value="ECO:0007669"/>
    <property type="project" value="UniProtKB-UniRule"/>
</dbReference>
<dbReference type="GO" id="GO:0016829">
    <property type="term" value="F:lyase activity"/>
    <property type="evidence" value="ECO:0007669"/>
    <property type="project" value="UniProtKB-KW"/>
</dbReference>
<dbReference type="GO" id="GO:0000105">
    <property type="term" value="P:L-histidine biosynthetic process"/>
    <property type="evidence" value="ECO:0007669"/>
    <property type="project" value="UniProtKB-UniRule"/>
</dbReference>
<dbReference type="CDD" id="cd04731">
    <property type="entry name" value="HisF"/>
    <property type="match status" value="1"/>
</dbReference>
<dbReference type="FunFam" id="3.20.20.70:FF:000006">
    <property type="entry name" value="Imidazole glycerol phosphate synthase subunit HisF"/>
    <property type="match status" value="1"/>
</dbReference>
<dbReference type="Gene3D" id="3.20.20.70">
    <property type="entry name" value="Aldolase class I"/>
    <property type="match status" value="1"/>
</dbReference>
<dbReference type="HAMAP" id="MF_01013">
    <property type="entry name" value="HisF"/>
    <property type="match status" value="1"/>
</dbReference>
<dbReference type="InterPro" id="IPR013785">
    <property type="entry name" value="Aldolase_TIM"/>
</dbReference>
<dbReference type="InterPro" id="IPR006062">
    <property type="entry name" value="His_biosynth"/>
</dbReference>
<dbReference type="InterPro" id="IPR004651">
    <property type="entry name" value="HisF"/>
</dbReference>
<dbReference type="InterPro" id="IPR050064">
    <property type="entry name" value="IGPS_HisA/HisF"/>
</dbReference>
<dbReference type="InterPro" id="IPR011060">
    <property type="entry name" value="RibuloseP-bd_barrel"/>
</dbReference>
<dbReference type="NCBIfam" id="TIGR00735">
    <property type="entry name" value="hisF"/>
    <property type="match status" value="1"/>
</dbReference>
<dbReference type="PANTHER" id="PTHR21235:SF2">
    <property type="entry name" value="IMIDAZOLE GLYCEROL PHOSPHATE SYNTHASE HISHF"/>
    <property type="match status" value="1"/>
</dbReference>
<dbReference type="PANTHER" id="PTHR21235">
    <property type="entry name" value="IMIDAZOLE GLYCEROL PHOSPHATE SYNTHASE SUBUNIT HISF/H IGP SYNTHASE SUBUNIT HISF/H"/>
    <property type="match status" value="1"/>
</dbReference>
<dbReference type="Pfam" id="PF00977">
    <property type="entry name" value="His_biosynth"/>
    <property type="match status" value="1"/>
</dbReference>
<dbReference type="SUPFAM" id="SSF51366">
    <property type="entry name" value="Ribulose-phoshate binding barrel"/>
    <property type="match status" value="1"/>
</dbReference>
<feature type="chain" id="PRO_1000084051" description="Imidazole glycerol phosphate synthase subunit HisF">
    <location>
        <begin position="1"/>
        <end position="261"/>
    </location>
</feature>
<feature type="active site" evidence="1">
    <location>
        <position position="12"/>
    </location>
</feature>
<feature type="active site" evidence="1">
    <location>
        <position position="131"/>
    </location>
</feature>
<organism>
    <name type="scientific">Brucella suis (strain ATCC 23445 / NCTC 10510)</name>
    <dbReference type="NCBI Taxonomy" id="470137"/>
    <lineage>
        <taxon>Bacteria</taxon>
        <taxon>Pseudomonadati</taxon>
        <taxon>Pseudomonadota</taxon>
        <taxon>Alphaproteobacteria</taxon>
        <taxon>Hyphomicrobiales</taxon>
        <taxon>Brucellaceae</taxon>
        <taxon>Brucella/Ochrobactrum group</taxon>
        <taxon>Brucella</taxon>
    </lineage>
</organism>
<reference key="1">
    <citation type="submission" date="2007-12" db="EMBL/GenBank/DDBJ databases">
        <title>Brucella suis ATCC 23445 whole genome shotgun sequencing project.</title>
        <authorList>
            <person name="Setubal J.C."/>
            <person name="Bowns C."/>
            <person name="Boyle S."/>
            <person name="Crasta O.R."/>
            <person name="Czar M.J."/>
            <person name="Dharmanolla C."/>
            <person name="Gillespie J.J."/>
            <person name="Kenyon R.W."/>
            <person name="Lu J."/>
            <person name="Mane S."/>
            <person name="Mohapatra S."/>
            <person name="Nagrani S."/>
            <person name="Purkayastha A."/>
            <person name="Rajasimha H.K."/>
            <person name="Shallom J.M."/>
            <person name="Shallom S."/>
            <person name="Shukla M."/>
            <person name="Snyder E.E."/>
            <person name="Sobral B.W."/>
            <person name="Wattam A.R."/>
            <person name="Will R."/>
            <person name="Williams K."/>
            <person name="Yoo H."/>
            <person name="Bruce D."/>
            <person name="Detter C."/>
            <person name="Munk C."/>
            <person name="Brettin T.S."/>
        </authorList>
    </citation>
    <scope>NUCLEOTIDE SEQUENCE [LARGE SCALE GENOMIC DNA]</scope>
    <source>
        <strain>ATCC 23445 / NCTC 10510</strain>
    </source>
</reference>
<evidence type="ECO:0000255" key="1">
    <source>
        <dbReference type="HAMAP-Rule" id="MF_01013"/>
    </source>
</evidence>
<name>HIS6_BRUSI</name>
<sequence length="261" mass="27474">MTLKARVIPCLDVKDGRVVKGVNFVDLIDAGDPVEAARAYDAAGADELCFLDITASSDNRETIFDVVARTAEQCFMPLTVGGGVRQVADIRKLLLAGADKVSINTAAVKNPEFVAEAADKFGNQCIVVAIDAKKVSGAGENDRWEIFTHGGRQPTGIDAVEFAQKVVDLGAGEILLTSMDRDGTKAGYDVALTRAVADSVRAPVIASGGVGTLDHLVAGIRDGHATAVLAASIFHFGTYTIGEAKRYMAEAGIPMRLDPVR</sequence>
<accession>B0CJI6</accession>
<keyword id="KW-0028">Amino-acid biosynthesis</keyword>
<keyword id="KW-0963">Cytoplasm</keyword>
<keyword id="KW-0368">Histidine biosynthesis</keyword>
<keyword id="KW-0456">Lyase</keyword>
<protein>
    <recommendedName>
        <fullName evidence="1">Imidazole glycerol phosphate synthase subunit HisF</fullName>
        <ecNumber evidence="1">4.3.2.10</ecNumber>
    </recommendedName>
    <alternativeName>
        <fullName evidence="1">IGP synthase cyclase subunit</fullName>
    </alternativeName>
    <alternativeName>
        <fullName evidence="1">IGP synthase subunit HisF</fullName>
    </alternativeName>
    <alternativeName>
        <fullName evidence="1">ImGP synthase subunit HisF</fullName>
        <shortName evidence="1">IGPS subunit HisF</shortName>
    </alternativeName>
</protein>